<accession>Q64Y09</accession>
<proteinExistence type="inferred from homology"/>
<organism>
    <name type="scientific">Bacteroides fragilis (strain YCH46)</name>
    <dbReference type="NCBI Taxonomy" id="295405"/>
    <lineage>
        <taxon>Bacteria</taxon>
        <taxon>Pseudomonadati</taxon>
        <taxon>Bacteroidota</taxon>
        <taxon>Bacteroidia</taxon>
        <taxon>Bacteroidales</taxon>
        <taxon>Bacteroidaceae</taxon>
        <taxon>Bacteroides</taxon>
    </lineage>
</organism>
<sequence>MFDFSIITSWIHQTLTSVMPEGLAVFIECVVIGVCIVALYAILAILLIYMERKVCGFFQCRLGPNRVGKWGSIQVLCDVLKMLTKEIIELKHSDKFLYNLAPFMVIIASFLTFSCLPISKGLEVLDFNVGVFFLLAASSIGVVGILLAGWGSNNKFSLIGAMRSGAQIISYELSVGLSILTMVVLMGTMQFSEIVESQANGWFIFKGHIPALIAFVIYLIAGNAECNRGPFDLPEAESELTAGYHTEYSGMHFGFFYLAEYLNMFIVAAVAATIFLGGWMPLHIVGLDGFNAVMDYIPGFIWFFGKAFFVVFLLMWIKWTFPRLRIDQILNLEWKYLVPISMVNLVIMVLIVVFGLHF</sequence>
<keyword id="KW-0997">Cell inner membrane</keyword>
<keyword id="KW-1003">Cell membrane</keyword>
<keyword id="KW-0472">Membrane</keyword>
<keyword id="KW-0520">NAD</keyword>
<keyword id="KW-0874">Quinone</keyword>
<keyword id="KW-1278">Translocase</keyword>
<keyword id="KW-0812">Transmembrane</keyword>
<keyword id="KW-1133">Transmembrane helix</keyword>
<keyword id="KW-0830">Ubiquinone</keyword>
<dbReference type="EC" id="7.1.1.-" evidence="1"/>
<dbReference type="EMBL" id="AP006841">
    <property type="protein sequence ID" value="BAD47617.1"/>
    <property type="molecule type" value="Genomic_DNA"/>
</dbReference>
<dbReference type="RefSeq" id="WP_005785048.1">
    <property type="nucleotide sequence ID" value="NZ_UYXF01000001.1"/>
</dbReference>
<dbReference type="RefSeq" id="YP_098151.1">
    <property type="nucleotide sequence ID" value="NC_006347.1"/>
</dbReference>
<dbReference type="SMR" id="Q64Y09"/>
<dbReference type="STRING" id="295405.BF0866"/>
<dbReference type="GeneID" id="60368202"/>
<dbReference type="KEGG" id="bfr:BF0866"/>
<dbReference type="PATRIC" id="fig|295405.11.peg.872"/>
<dbReference type="HOGENOM" id="CLU_015134_0_1_10"/>
<dbReference type="OrthoDB" id="9803734at2"/>
<dbReference type="Proteomes" id="UP000002197">
    <property type="component" value="Chromosome"/>
</dbReference>
<dbReference type="GO" id="GO:0005886">
    <property type="term" value="C:plasma membrane"/>
    <property type="evidence" value="ECO:0007669"/>
    <property type="project" value="UniProtKB-SubCell"/>
</dbReference>
<dbReference type="GO" id="GO:0003954">
    <property type="term" value="F:NADH dehydrogenase activity"/>
    <property type="evidence" value="ECO:0007669"/>
    <property type="project" value="TreeGrafter"/>
</dbReference>
<dbReference type="GO" id="GO:0016655">
    <property type="term" value="F:oxidoreductase activity, acting on NAD(P)H, quinone or similar compound as acceptor"/>
    <property type="evidence" value="ECO:0007669"/>
    <property type="project" value="UniProtKB-UniRule"/>
</dbReference>
<dbReference type="GO" id="GO:0048038">
    <property type="term" value="F:quinone binding"/>
    <property type="evidence" value="ECO:0007669"/>
    <property type="project" value="UniProtKB-KW"/>
</dbReference>
<dbReference type="GO" id="GO:0009060">
    <property type="term" value="P:aerobic respiration"/>
    <property type="evidence" value="ECO:0007669"/>
    <property type="project" value="TreeGrafter"/>
</dbReference>
<dbReference type="HAMAP" id="MF_01350">
    <property type="entry name" value="NDH1_NuoH"/>
    <property type="match status" value="1"/>
</dbReference>
<dbReference type="InterPro" id="IPR001694">
    <property type="entry name" value="NADH_UbQ_OxRdtase_su1/FPO"/>
</dbReference>
<dbReference type="InterPro" id="IPR018086">
    <property type="entry name" value="NADH_UbQ_OxRdtase_su1_CS"/>
</dbReference>
<dbReference type="NCBIfam" id="NF004741">
    <property type="entry name" value="PRK06076.1-2"/>
    <property type="match status" value="1"/>
</dbReference>
<dbReference type="PANTHER" id="PTHR11432">
    <property type="entry name" value="NADH DEHYDROGENASE SUBUNIT 1"/>
    <property type="match status" value="1"/>
</dbReference>
<dbReference type="PANTHER" id="PTHR11432:SF3">
    <property type="entry name" value="NADH-UBIQUINONE OXIDOREDUCTASE CHAIN 1"/>
    <property type="match status" value="1"/>
</dbReference>
<dbReference type="Pfam" id="PF00146">
    <property type="entry name" value="NADHdh"/>
    <property type="match status" value="1"/>
</dbReference>
<dbReference type="PROSITE" id="PS00668">
    <property type="entry name" value="COMPLEX1_ND1_2"/>
    <property type="match status" value="1"/>
</dbReference>
<comment type="function">
    <text evidence="1">NDH-1 shuttles electrons from NADH, via FMN and iron-sulfur (Fe-S) centers, to quinones in the respiratory chain. The immediate electron acceptor for the enzyme in this species is believed to be ubiquinone. Couples the redox reaction to proton translocation (for every two electrons transferred, four hydrogen ions are translocated across the cytoplasmic membrane), and thus conserves the redox energy in a proton gradient. This subunit may bind ubiquinone.</text>
</comment>
<comment type="catalytic activity">
    <reaction evidence="1">
        <text>a quinone + NADH + 5 H(+)(in) = a quinol + NAD(+) + 4 H(+)(out)</text>
        <dbReference type="Rhea" id="RHEA:57888"/>
        <dbReference type="ChEBI" id="CHEBI:15378"/>
        <dbReference type="ChEBI" id="CHEBI:24646"/>
        <dbReference type="ChEBI" id="CHEBI:57540"/>
        <dbReference type="ChEBI" id="CHEBI:57945"/>
        <dbReference type="ChEBI" id="CHEBI:132124"/>
    </reaction>
</comment>
<comment type="subunit">
    <text evidence="1">NDH-1 is composed of 14 different subunits. Subunits NuoA, H, J, K, L, M, N constitute the membrane sector of the complex.</text>
</comment>
<comment type="subcellular location">
    <subcellularLocation>
        <location evidence="1">Cell inner membrane</location>
        <topology evidence="1">Multi-pass membrane protein</topology>
    </subcellularLocation>
</comment>
<comment type="similarity">
    <text evidence="1">Belongs to the complex I subunit 1 family.</text>
</comment>
<evidence type="ECO:0000255" key="1">
    <source>
        <dbReference type="HAMAP-Rule" id="MF_01350"/>
    </source>
</evidence>
<feature type="chain" id="PRO_0000244890" description="NADH-quinone oxidoreductase subunit H">
    <location>
        <begin position="1"/>
        <end position="358"/>
    </location>
</feature>
<feature type="transmembrane region" description="Helical" evidence="1">
    <location>
        <begin position="30"/>
        <end position="50"/>
    </location>
</feature>
<feature type="transmembrane region" description="Helical" evidence="1">
    <location>
        <begin position="96"/>
        <end position="116"/>
    </location>
</feature>
<feature type="transmembrane region" description="Helical" evidence="1">
    <location>
        <begin position="129"/>
        <end position="149"/>
    </location>
</feature>
<feature type="transmembrane region" description="Helical" evidence="1">
    <location>
        <begin position="168"/>
        <end position="188"/>
    </location>
</feature>
<feature type="transmembrane region" description="Helical" evidence="1">
    <location>
        <begin position="201"/>
        <end position="221"/>
    </location>
</feature>
<feature type="transmembrane region" description="Helical" evidence="1">
    <location>
        <begin position="265"/>
        <end position="285"/>
    </location>
</feature>
<feature type="transmembrane region" description="Helical" evidence="1">
    <location>
        <begin position="297"/>
        <end position="317"/>
    </location>
</feature>
<feature type="transmembrane region" description="Helical" evidence="1">
    <location>
        <begin position="336"/>
        <end position="356"/>
    </location>
</feature>
<gene>
    <name evidence="1" type="primary">nuoH</name>
    <name type="ordered locus">BF0866</name>
</gene>
<protein>
    <recommendedName>
        <fullName evidence="1">NADH-quinone oxidoreductase subunit H</fullName>
        <ecNumber evidence="1">7.1.1.-</ecNumber>
    </recommendedName>
    <alternativeName>
        <fullName evidence="1">NADH dehydrogenase I subunit H</fullName>
    </alternativeName>
    <alternativeName>
        <fullName evidence="1">NDH-1 subunit H</fullName>
    </alternativeName>
</protein>
<reference key="1">
    <citation type="journal article" date="2004" name="Proc. Natl. Acad. Sci. U.S.A.">
        <title>Genomic analysis of Bacteroides fragilis reveals extensive DNA inversions regulating cell surface adaptation.</title>
        <authorList>
            <person name="Kuwahara T."/>
            <person name="Yamashita A."/>
            <person name="Hirakawa H."/>
            <person name="Nakayama H."/>
            <person name="Toh H."/>
            <person name="Okada N."/>
            <person name="Kuhara S."/>
            <person name="Hattori M."/>
            <person name="Hayashi T."/>
            <person name="Ohnishi Y."/>
        </authorList>
    </citation>
    <scope>NUCLEOTIDE SEQUENCE [LARGE SCALE GENOMIC DNA]</scope>
    <source>
        <strain>YCH46</strain>
    </source>
</reference>
<name>NUOH_BACFR</name>